<gene>
    <name evidence="1" type="primary">atpF1</name>
    <name type="ordered locus">RPC_4813</name>
</gene>
<accession>Q20X01</accession>
<evidence type="ECO:0000255" key="1">
    <source>
        <dbReference type="HAMAP-Rule" id="MF_01398"/>
    </source>
</evidence>
<protein>
    <recommendedName>
        <fullName evidence="1">ATP synthase subunit b 1</fullName>
    </recommendedName>
    <alternativeName>
        <fullName evidence="1">ATP synthase F(0) sector subunit b 1</fullName>
    </alternativeName>
    <alternativeName>
        <fullName evidence="1">ATPase subunit I 1</fullName>
    </alternativeName>
    <alternativeName>
        <fullName evidence="1">F-type ATPase subunit b 1</fullName>
        <shortName evidence="1">F-ATPase subunit b 1</shortName>
    </alternativeName>
</protein>
<reference key="1">
    <citation type="submission" date="2006-03" db="EMBL/GenBank/DDBJ databases">
        <title>Complete sequence of Rhodopseudomonas palustris BisB18.</title>
        <authorList>
            <consortium name="US DOE Joint Genome Institute"/>
            <person name="Copeland A."/>
            <person name="Lucas S."/>
            <person name="Lapidus A."/>
            <person name="Barry K."/>
            <person name="Detter J.C."/>
            <person name="Glavina del Rio T."/>
            <person name="Hammon N."/>
            <person name="Israni S."/>
            <person name="Dalin E."/>
            <person name="Tice H."/>
            <person name="Pitluck S."/>
            <person name="Chain P."/>
            <person name="Malfatti S."/>
            <person name="Shin M."/>
            <person name="Vergez L."/>
            <person name="Schmutz J."/>
            <person name="Larimer F."/>
            <person name="Land M."/>
            <person name="Hauser L."/>
            <person name="Pelletier D.A."/>
            <person name="Kyrpides N."/>
            <person name="Anderson I."/>
            <person name="Oda Y."/>
            <person name="Harwood C.S."/>
            <person name="Richardson P."/>
        </authorList>
    </citation>
    <scope>NUCLEOTIDE SEQUENCE [LARGE SCALE GENOMIC DNA]</scope>
    <source>
        <strain>BisB18</strain>
    </source>
</reference>
<name>ATPF1_RHOPB</name>
<comment type="function">
    <text evidence="1">F(1)F(0) ATP synthase produces ATP from ADP in the presence of a proton or sodium gradient. F-type ATPases consist of two structural domains, F(1) containing the extramembraneous catalytic core and F(0) containing the membrane proton channel, linked together by a central stalk and a peripheral stalk. During catalysis, ATP synthesis in the catalytic domain of F(1) is coupled via a rotary mechanism of the central stalk subunits to proton translocation.</text>
</comment>
<comment type="function">
    <text evidence="1">Component of the F(0) channel, it forms part of the peripheral stalk, linking F(1) to F(0).</text>
</comment>
<comment type="subunit">
    <text evidence="1">F-type ATPases have 2 components, F(1) - the catalytic core - and F(0) - the membrane proton channel. F(1) has five subunits: alpha(3), beta(3), gamma(1), delta(1), epsilon(1). F(0) has three main subunits: a(1), b(2) and c(10-14). The alpha and beta chains form an alternating ring which encloses part of the gamma chain. F(1) is attached to F(0) by a central stalk formed by the gamma and epsilon chains, while a peripheral stalk is formed by the delta and b chains.</text>
</comment>
<comment type="subcellular location">
    <subcellularLocation>
        <location evidence="1">Cell inner membrane</location>
        <topology evidence="1">Single-pass membrane protein</topology>
    </subcellularLocation>
</comment>
<comment type="similarity">
    <text evidence="1">Belongs to the ATPase B chain family.</text>
</comment>
<sequence length="164" mass="17604">MTGILAEPETWVAVAFVILMGVFAYFGVHRTVLKSLDNRRDRIKAELDEAARLKEEAAALLAEYKARRASAEREAQEIIAGAKDEAERIAAEAKAKLEDFVARRTKTAEGKIALAEAQAVADVRSAAANAAVAAASTILSQSVKGQVAEGLLQRGIEEVRSKLN</sequence>
<feature type="chain" id="PRO_0000368722" description="ATP synthase subunit b 1">
    <location>
        <begin position="1"/>
        <end position="164"/>
    </location>
</feature>
<feature type="transmembrane region" description="Helical" evidence="1">
    <location>
        <begin position="8"/>
        <end position="28"/>
    </location>
</feature>
<organism>
    <name type="scientific">Rhodopseudomonas palustris (strain BisB18)</name>
    <dbReference type="NCBI Taxonomy" id="316056"/>
    <lineage>
        <taxon>Bacteria</taxon>
        <taxon>Pseudomonadati</taxon>
        <taxon>Pseudomonadota</taxon>
        <taxon>Alphaproteobacteria</taxon>
        <taxon>Hyphomicrobiales</taxon>
        <taxon>Nitrobacteraceae</taxon>
        <taxon>Rhodopseudomonas</taxon>
    </lineage>
</organism>
<keyword id="KW-0066">ATP synthesis</keyword>
<keyword id="KW-0997">Cell inner membrane</keyword>
<keyword id="KW-1003">Cell membrane</keyword>
<keyword id="KW-0138">CF(0)</keyword>
<keyword id="KW-0375">Hydrogen ion transport</keyword>
<keyword id="KW-0406">Ion transport</keyword>
<keyword id="KW-0472">Membrane</keyword>
<keyword id="KW-0812">Transmembrane</keyword>
<keyword id="KW-1133">Transmembrane helix</keyword>
<keyword id="KW-0813">Transport</keyword>
<dbReference type="EMBL" id="CP000301">
    <property type="protein sequence ID" value="ABD90335.1"/>
    <property type="molecule type" value="Genomic_DNA"/>
</dbReference>
<dbReference type="SMR" id="Q20X01"/>
<dbReference type="STRING" id="316056.RPC_4813"/>
<dbReference type="KEGG" id="rpc:RPC_4813"/>
<dbReference type="eggNOG" id="COG0711">
    <property type="taxonomic scope" value="Bacteria"/>
</dbReference>
<dbReference type="HOGENOM" id="CLU_079215_6_1_5"/>
<dbReference type="OrthoDB" id="8479836at2"/>
<dbReference type="GO" id="GO:0005886">
    <property type="term" value="C:plasma membrane"/>
    <property type="evidence" value="ECO:0007669"/>
    <property type="project" value="UniProtKB-SubCell"/>
</dbReference>
<dbReference type="GO" id="GO:0045259">
    <property type="term" value="C:proton-transporting ATP synthase complex"/>
    <property type="evidence" value="ECO:0007669"/>
    <property type="project" value="UniProtKB-KW"/>
</dbReference>
<dbReference type="GO" id="GO:0046933">
    <property type="term" value="F:proton-transporting ATP synthase activity, rotational mechanism"/>
    <property type="evidence" value="ECO:0007669"/>
    <property type="project" value="UniProtKB-UniRule"/>
</dbReference>
<dbReference type="GO" id="GO:0046961">
    <property type="term" value="F:proton-transporting ATPase activity, rotational mechanism"/>
    <property type="evidence" value="ECO:0007669"/>
    <property type="project" value="TreeGrafter"/>
</dbReference>
<dbReference type="CDD" id="cd06503">
    <property type="entry name" value="ATP-synt_Fo_b"/>
    <property type="match status" value="1"/>
</dbReference>
<dbReference type="HAMAP" id="MF_01398">
    <property type="entry name" value="ATP_synth_b_bprime"/>
    <property type="match status" value="1"/>
</dbReference>
<dbReference type="InterPro" id="IPR002146">
    <property type="entry name" value="ATP_synth_b/b'su_bac/chlpt"/>
</dbReference>
<dbReference type="InterPro" id="IPR050059">
    <property type="entry name" value="ATP_synthase_B_chain"/>
</dbReference>
<dbReference type="PANTHER" id="PTHR33445:SF1">
    <property type="entry name" value="ATP SYNTHASE SUBUNIT B"/>
    <property type="match status" value="1"/>
</dbReference>
<dbReference type="PANTHER" id="PTHR33445">
    <property type="entry name" value="ATP SYNTHASE SUBUNIT B', CHLOROPLASTIC"/>
    <property type="match status" value="1"/>
</dbReference>
<dbReference type="Pfam" id="PF00430">
    <property type="entry name" value="ATP-synt_B"/>
    <property type="match status" value="1"/>
</dbReference>
<proteinExistence type="inferred from homology"/>